<proteinExistence type="inferred from homology"/>
<accession>Q2JVE0</accession>
<feature type="chain" id="PRO_1000128611" description="Small ribosomal subunit protein uS14">
    <location>
        <begin position="1"/>
        <end position="101"/>
    </location>
</feature>
<dbReference type="EMBL" id="CP000239">
    <property type="protein sequence ID" value="ABC99303.1"/>
    <property type="molecule type" value="Genomic_DNA"/>
</dbReference>
<dbReference type="RefSeq" id="WP_011429986.1">
    <property type="nucleotide sequence ID" value="NC_007775.1"/>
</dbReference>
<dbReference type="SMR" id="Q2JVE0"/>
<dbReference type="STRING" id="321327.CYA_1114"/>
<dbReference type="KEGG" id="cya:CYA_1114"/>
<dbReference type="eggNOG" id="COG0199">
    <property type="taxonomic scope" value="Bacteria"/>
</dbReference>
<dbReference type="HOGENOM" id="CLU_139869_0_1_3"/>
<dbReference type="OrthoDB" id="9810484at2"/>
<dbReference type="Proteomes" id="UP000008818">
    <property type="component" value="Chromosome"/>
</dbReference>
<dbReference type="GO" id="GO:0005737">
    <property type="term" value="C:cytoplasm"/>
    <property type="evidence" value="ECO:0007669"/>
    <property type="project" value="UniProtKB-ARBA"/>
</dbReference>
<dbReference type="GO" id="GO:0015935">
    <property type="term" value="C:small ribosomal subunit"/>
    <property type="evidence" value="ECO:0007669"/>
    <property type="project" value="TreeGrafter"/>
</dbReference>
<dbReference type="GO" id="GO:0019843">
    <property type="term" value="F:rRNA binding"/>
    <property type="evidence" value="ECO:0007669"/>
    <property type="project" value="UniProtKB-UniRule"/>
</dbReference>
<dbReference type="GO" id="GO:0003735">
    <property type="term" value="F:structural constituent of ribosome"/>
    <property type="evidence" value="ECO:0007669"/>
    <property type="project" value="InterPro"/>
</dbReference>
<dbReference type="GO" id="GO:0006412">
    <property type="term" value="P:translation"/>
    <property type="evidence" value="ECO:0007669"/>
    <property type="project" value="UniProtKB-UniRule"/>
</dbReference>
<dbReference type="FunFam" id="1.10.287.1480:FF:000001">
    <property type="entry name" value="30S ribosomal protein S14"/>
    <property type="match status" value="1"/>
</dbReference>
<dbReference type="Gene3D" id="1.10.287.1480">
    <property type="match status" value="1"/>
</dbReference>
<dbReference type="HAMAP" id="MF_00537">
    <property type="entry name" value="Ribosomal_uS14_1"/>
    <property type="match status" value="1"/>
</dbReference>
<dbReference type="InterPro" id="IPR001209">
    <property type="entry name" value="Ribosomal_uS14"/>
</dbReference>
<dbReference type="InterPro" id="IPR023036">
    <property type="entry name" value="Ribosomal_uS14_bac/plastid"/>
</dbReference>
<dbReference type="InterPro" id="IPR018271">
    <property type="entry name" value="Ribosomal_uS14_CS"/>
</dbReference>
<dbReference type="NCBIfam" id="NF006477">
    <property type="entry name" value="PRK08881.1"/>
    <property type="match status" value="1"/>
</dbReference>
<dbReference type="PANTHER" id="PTHR19836">
    <property type="entry name" value="30S RIBOSOMAL PROTEIN S14"/>
    <property type="match status" value="1"/>
</dbReference>
<dbReference type="PANTHER" id="PTHR19836:SF19">
    <property type="entry name" value="SMALL RIBOSOMAL SUBUNIT PROTEIN US14M"/>
    <property type="match status" value="1"/>
</dbReference>
<dbReference type="Pfam" id="PF00253">
    <property type="entry name" value="Ribosomal_S14"/>
    <property type="match status" value="1"/>
</dbReference>
<dbReference type="SUPFAM" id="SSF57716">
    <property type="entry name" value="Glucocorticoid receptor-like (DNA-binding domain)"/>
    <property type="match status" value="1"/>
</dbReference>
<dbReference type="PROSITE" id="PS00527">
    <property type="entry name" value="RIBOSOMAL_S14"/>
    <property type="match status" value="1"/>
</dbReference>
<gene>
    <name evidence="1" type="primary">rpsN</name>
    <name evidence="1" type="synonym">rps14</name>
    <name type="ordered locus">CYA_1114</name>
</gene>
<evidence type="ECO:0000255" key="1">
    <source>
        <dbReference type="HAMAP-Rule" id="MF_00537"/>
    </source>
</evidence>
<evidence type="ECO:0000305" key="2"/>
<protein>
    <recommendedName>
        <fullName evidence="1">Small ribosomal subunit protein uS14</fullName>
    </recommendedName>
    <alternativeName>
        <fullName evidence="2">30S ribosomal protein S14</fullName>
    </alternativeName>
</protein>
<name>RS14_SYNJA</name>
<comment type="function">
    <text evidence="1">Binds 16S rRNA, required for the assembly of 30S particles and may also be responsible for determining the conformation of the 16S rRNA at the A site.</text>
</comment>
<comment type="subunit">
    <text evidence="1">Part of the 30S ribosomal subunit. Contacts proteins S3 and S10.</text>
</comment>
<comment type="similarity">
    <text evidence="1">Belongs to the universal ribosomal protein uS14 family.</text>
</comment>
<organism>
    <name type="scientific">Synechococcus sp. (strain JA-3-3Ab)</name>
    <name type="common">Cyanobacteria bacterium Yellowstone A-Prime</name>
    <dbReference type="NCBI Taxonomy" id="321327"/>
    <lineage>
        <taxon>Bacteria</taxon>
        <taxon>Bacillati</taxon>
        <taxon>Cyanobacteriota</taxon>
        <taxon>Cyanophyceae</taxon>
        <taxon>Synechococcales</taxon>
        <taxon>Synechococcaceae</taxon>
        <taxon>Synechococcus</taxon>
    </lineage>
</organism>
<keyword id="KW-0687">Ribonucleoprotein</keyword>
<keyword id="KW-0689">Ribosomal protein</keyword>
<keyword id="KW-0694">RNA-binding</keyword>
<keyword id="KW-0699">rRNA-binding</keyword>
<sequence length="101" mass="11964">MAKKSMIEREKKRQRLVEKYREKRQQLKAAMADPNIDQATRMELHAQLQKLPRASSPTRLRNRCWKTGRPRGYFRDFGLCRNSLREMAHRGLLPGVVKASW</sequence>
<reference key="1">
    <citation type="journal article" date="2007" name="ISME J.">
        <title>Population level functional diversity in a microbial community revealed by comparative genomic and metagenomic analyses.</title>
        <authorList>
            <person name="Bhaya D."/>
            <person name="Grossman A.R."/>
            <person name="Steunou A.-S."/>
            <person name="Khuri N."/>
            <person name="Cohan F.M."/>
            <person name="Hamamura N."/>
            <person name="Melendrez M.C."/>
            <person name="Bateson M.M."/>
            <person name="Ward D.M."/>
            <person name="Heidelberg J.F."/>
        </authorList>
    </citation>
    <scope>NUCLEOTIDE SEQUENCE [LARGE SCALE GENOMIC DNA]</scope>
    <source>
        <strain>JA-3-3Ab</strain>
    </source>
</reference>